<gene>
    <name evidence="1" type="primary">smpB</name>
    <name type="ordered locus">BCG9842_B0002</name>
</gene>
<reference key="1">
    <citation type="submission" date="2008-10" db="EMBL/GenBank/DDBJ databases">
        <title>Genome sequence of Bacillus cereus G9842.</title>
        <authorList>
            <person name="Dodson R.J."/>
            <person name="Durkin A.S."/>
            <person name="Rosovitz M.J."/>
            <person name="Rasko D.A."/>
            <person name="Hoffmaster A."/>
            <person name="Ravel J."/>
            <person name="Sutton G."/>
        </authorList>
    </citation>
    <scope>NUCLEOTIDE SEQUENCE [LARGE SCALE GENOMIC DNA]</scope>
    <source>
        <strain>G9842</strain>
    </source>
</reference>
<dbReference type="EMBL" id="CP001186">
    <property type="protein sequence ID" value="ACK97885.1"/>
    <property type="molecule type" value="Genomic_DNA"/>
</dbReference>
<dbReference type="RefSeq" id="WP_001123917.1">
    <property type="nucleotide sequence ID" value="NC_011772.1"/>
</dbReference>
<dbReference type="SMR" id="B7IP12"/>
<dbReference type="GeneID" id="64186391"/>
<dbReference type="KEGG" id="bcg:BCG9842_B0002"/>
<dbReference type="HOGENOM" id="CLU_108953_0_0_9"/>
<dbReference type="Proteomes" id="UP000006744">
    <property type="component" value="Chromosome"/>
</dbReference>
<dbReference type="GO" id="GO:0005829">
    <property type="term" value="C:cytosol"/>
    <property type="evidence" value="ECO:0007669"/>
    <property type="project" value="TreeGrafter"/>
</dbReference>
<dbReference type="GO" id="GO:0003723">
    <property type="term" value="F:RNA binding"/>
    <property type="evidence" value="ECO:0007669"/>
    <property type="project" value="UniProtKB-UniRule"/>
</dbReference>
<dbReference type="GO" id="GO:0070929">
    <property type="term" value="P:trans-translation"/>
    <property type="evidence" value="ECO:0007669"/>
    <property type="project" value="UniProtKB-UniRule"/>
</dbReference>
<dbReference type="CDD" id="cd09294">
    <property type="entry name" value="SmpB"/>
    <property type="match status" value="1"/>
</dbReference>
<dbReference type="Gene3D" id="2.40.280.10">
    <property type="match status" value="1"/>
</dbReference>
<dbReference type="HAMAP" id="MF_00023">
    <property type="entry name" value="SmpB"/>
    <property type="match status" value="1"/>
</dbReference>
<dbReference type="InterPro" id="IPR023620">
    <property type="entry name" value="SmpB"/>
</dbReference>
<dbReference type="InterPro" id="IPR000037">
    <property type="entry name" value="SsrA-bd_prot"/>
</dbReference>
<dbReference type="InterPro" id="IPR020081">
    <property type="entry name" value="SsrA-bd_prot_CS"/>
</dbReference>
<dbReference type="NCBIfam" id="NF003843">
    <property type="entry name" value="PRK05422.1"/>
    <property type="match status" value="1"/>
</dbReference>
<dbReference type="NCBIfam" id="TIGR00086">
    <property type="entry name" value="smpB"/>
    <property type="match status" value="1"/>
</dbReference>
<dbReference type="PANTHER" id="PTHR30308:SF2">
    <property type="entry name" value="SSRA-BINDING PROTEIN"/>
    <property type="match status" value="1"/>
</dbReference>
<dbReference type="PANTHER" id="PTHR30308">
    <property type="entry name" value="TMRNA-BINDING COMPONENT OF TRANS-TRANSLATION TAGGING COMPLEX"/>
    <property type="match status" value="1"/>
</dbReference>
<dbReference type="Pfam" id="PF01668">
    <property type="entry name" value="SmpB"/>
    <property type="match status" value="1"/>
</dbReference>
<dbReference type="SUPFAM" id="SSF74982">
    <property type="entry name" value="Small protein B (SmpB)"/>
    <property type="match status" value="1"/>
</dbReference>
<dbReference type="PROSITE" id="PS01317">
    <property type="entry name" value="SSRP"/>
    <property type="match status" value="1"/>
</dbReference>
<accession>B7IP12</accession>
<comment type="function">
    <text evidence="1">Required for rescue of stalled ribosomes mediated by trans-translation. Binds to transfer-messenger RNA (tmRNA), required for stable association of tmRNA with ribosomes. tmRNA and SmpB together mimic tRNA shape, replacing the anticodon stem-loop with SmpB. tmRNA is encoded by the ssrA gene; the 2 termini fold to resemble tRNA(Ala) and it encodes a 'tag peptide', a short internal open reading frame. During trans-translation Ala-aminoacylated tmRNA acts like a tRNA, entering the A-site of stalled ribosomes, displacing the stalled mRNA. The ribosome then switches to translate the ORF on the tmRNA; the nascent peptide is terminated with the 'tag peptide' encoded by the tmRNA and targeted for degradation. The ribosome is freed to recommence translation, which seems to be the essential function of trans-translation.</text>
</comment>
<comment type="subcellular location">
    <subcellularLocation>
        <location evidence="1">Cytoplasm</location>
    </subcellularLocation>
    <text evidence="1">The tmRNA-SmpB complex associates with stalled 70S ribosomes.</text>
</comment>
<comment type="similarity">
    <text evidence="1">Belongs to the SmpB family.</text>
</comment>
<protein>
    <recommendedName>
        <fullName evidence="1">SsrA-binding protein</fullName>
    </recommendedName>
    <alternativeName>
        <fullName evidence="1">Small protein B</fullName>
    </alternativeName>
</protein>
<keyword id="KW-0963">Cytoplasm</keyword>
<keyword id="KW-0694">RNA-binding</keyword>
<feature type="chain" id="PRO_1000116413" description="SsrA-binding protein">
    <location>
        <begin position="1"/>
        <end position="155"/>
    </location>
</feature>
<evidence type="ECO:0000255" key="1">
    <source>
        <dbReference type="HAMAP-Rule" id="MF_00023"/>
    </source>
</evidence>
<sequence length="155" mass="17929">MPKGTGKVIAQNKKAFHDYFIEETYEAGLVLQGTEIKSIRAGRVNLKDAFARIHNGEVWVHNMHINTYEQGNRFNHDPLRTRKLLLHKKEIDKLAGAAKETGYALVPLRIYLKNGFAKMALGLAKGKKQYDKRHDLKEKEAKREIARVFRDRQKM</sequence>
<proteinExistence type="inferred from homology"/>
<name>SSRP_BACC2</name>
<organism>
    <name type="scientific">Bacillus cereus (strain G9842)</name>
    <dbReference type="NCBI Taxonomy" id="405531"/>
    <lineage>
        <taxon>Bacteria</taxon>
        <taxon>Bacillati</taxon>
        <taxon>Bacillota</taxon>
        <taxon>Bacilli</taxon>
        <taxon>Bacillales</taxon>
        <taxon>Bacillaceae</taxon>
        <taxon>Bacillus</taxon>
        <taxon>Bacillus cereus group</taxon>
    </lineage>
</organism>